<accession>Q6B8S5</accession>
<organism>
    <name type="scientific">Gracilaria tenuistipitata var. liui</name>
    <name type="common">Red alga</name>
    <dbReference type="NCBI Taxonomy" id="285951"/>
    <lineage>
        <taxon>Eukaryota</taxon>
        <taxon>Rhodophyta</taxon>
        <taxon>Florideophyceae</taxon>
        <taxon>Rhodymeniophycidae</taxon>
        <taxon>Gracilariales</taxon>
        <taxon>Gracilariaceae</taxon>
        <taxon>Gracilaria</taxon>
        <taxon>Gracilaria tenuistipitata</taxon>
    </lineage>
</organism>
<feature type="chain" id="PRO_0000188266" description="ATP synthase epsilon chain, chloroplastic">
    <location>
        <begin position="1"/>
        <end position="134"/>
    </location>
</feature>
<sequence>MTLNIRVIAPDRTVWDANAEEVILPSSTGQVGILKGHIPLLTAIDIGVMRVRIEKEWQPIILLGGFAEVKDDKITILVNGAEEVSKIEIKAAKENLEKATKILNEARNDKDKIEATQNLRRARARIQAANVLAN</sequence>
<name>ATPE_GRATL</name>
<protein>
    <recommendedName>
        <fullName evidence="1">ATP synthase epsilon chain, chloroplastic</fullName>
    </recommendedName>
    <alternativeName>
        <fullName evidence="1">ATP synthase F1 sector epsilon subunit</fullName>
    </alternativeName>
    <alternativeName>
        <fullName evidence="1">F-ATPase epsilon subunit</fullName>
    </alternativeName>
</protein>
<reference key="1">
    <citation type="journal article" date="2004" name="J. Mol. Evol.">
        <title>Comparative analysis of the complete plastid genome sequence of the red alga Gracilaria tenuistipitata var. liui provides insights into the evolution of rhodoplasts and their relationship to other plastids.</title>
        <authorList>
            <person name="Hagopian J.C."/>
            <person name="Reis M."/>
            <person name="Kitajima J.P."/>
            <person name="Bhattacharya D."/>
            <person name="de Oliveira M.C."/>
        </authorList>
    </citation>
    <scope>NUCLEOTIDE SEQUENCE [LARGE SCALE GENOMIC DNA]</scope>
</reference>
<proteinExistence type="inferred from homology"/>
<evidence type="ECO:0000255" key="1">
    <source>
        <dbReference type="HAMAP-Rule" id="MF_00530"/>
    </source>
</evidence>
<dbReference type="EMBL" id="AY673996">
    <property type="protein sequence ID" value="AAT79710.1"/>
    <property type="molecule type" value="Genomic_DNA"/>
</dbReference>
<dbReference type="RefSeq" id="YP_063635.1">
    <property type="nucleotide sequence ID" value="NC_006137.1"/>
</dbReference>
<dbReference type="SMR" id="Q6B8S5"/>
<dbReference type="GeneID" id="2943945"/>
<dbReference type="GO" id="GO:0009535">
    <property type="term" value="C:chloroplast thylakoid membrane"/>
    <property type="evidence" value="ECO:0007669"/>
    <property type="project" value="UniProtKB-SubCell"/>
</dbReference>
<dbReference type="GO" id="GO:0045259">
    <property type="term" value="C:proton-transporting ATP synthase complex"/>
    <property type="evidence" value="ECO:0007669"/>
    <property type="project" value="UniProtKB-KW"/>
</dbReference>
<dbReference type="GO" id="GO:0005524">
    <property type="term" value="F:ATP binding"/>
    <property type="evidence" value="ECO:0007669"/>
    <property type="project" value="UniProtKB-UniRule"/>
</dbReference>
<dbReference type="GO" id="GO:0046933">
    <property type="term" value="F:proton-transporting ATP synthase activity, rotational mechanism"/>
    <property type="evidence" value="ECO:0007669"/>
    <property type="project" value="UniProtKB-UniRule"/>
</dbReference>
<dbReference type="CDD" id="cd12152">
    <property type="entry name" value="F1-ATPase_delta"/>
    <property type="match status" value="1"/>
</dbReference>
<dbReference type="Gene3D" id="2.60.15.10">
    <property type="entry name" value="F0F1 ATP synthase delta/epsilon subunit, N-terminal"/>
    <property type="match status" value="1"/>
</dbReference>
<dbReference type="Gene3D" id="1.10.287.540">
    <property type="entry name" value="Helix hairpin bin"/>
    <property type="match status" value="1"/>
</dbReference>
<dbReference type="HAMAP" id="MF_00530">
    <property type="entry name" value="ATP_synth_epsil_bac"/>
    <property type="match status" value="1"/>
</dbReference>
<dbReference type="InterPro" id="IPR001469">
    <property type="entry name" value="ATP_synth_F1_dsu/esu"/>
</dbReference>
<dbReference type="InterPro" id="IPR020546">
    <property type="entry name" value="ATP_synth_F1_dsu/esu_N"/>
</dbReference>
<dbReference type="InterPro" id="IPR020547">
    <property type="entry name" value="ATP_synth_F1_esu_C"/>
</dbReference>
<dbReference type="InterPro" id="IPR036771">
    <property type="entry name" value="ATPsynth_dsu/esu_N"/>
</dbReference>
<dbReference type="NCBIfam" id="TIGR01216">
    <property type="entry name" value="ATP_synt_epsi"/>
    <property type="match status" value="1"/>
</dbReference>
<dbReference type="PANTHER" id="PTHR13822">
    <property type="entry name" value="ATP SYNTHASE DELTA/EPSILON CHAIN"/>
    <property type="match status" value="1"/>
</dbReference>
<dbReference type="PANTHER" id="PTHR13822:SF10">
    <property type="entry name" value="ATP SYNTHASE EPSILON CHAIN, CHLOROPLASTIC"/>
    <property type="match status" value="1"/>
</dbReference>
<dbReference type="Pfam" id="PF00401">
    <property type="entry name" value="ATP-synt_DE"/>
    <property type="match status" value="1"/>
</dbReference>
<dbReference type="Pfam" id="PF02823">
    <property type="entry name" value="ATP-synt_DE_N"/>
    <property type="match status" value="1"/>
</dbReference>
<dbReference type="SUPFAM" id="SSF51344">
    <property type="entry name" value="Epsilon subunit of F1F0-ATP synthase N-terminal domain"/>
    <property type="match status" value="1"/>
</dbReference>
<comment type="function">
    <text evidence="1">Produces ATP from ADP in the presence of a proton gradient across the membrane.</text>
</comment>
<comment type="subunit">
    <text evidence="1">F-type ATPases have 2 components, CF(1) - the catalytic core - and CF(0) - the membrane proton channel. CF(1) has five subunits: alpha(3), beta(3), gamma(1), delta(1), epsilon(1). CF(0) has three main subunits: a, b and c.</text>
</comment>
<comment type="subcellular location">
    <subcellularLocation>
        <location evidence="1">Plastid</location>
        <location evidence="1">Chloroplast thylakoid membrane</location>
        <topology evidence="1">Peripheral membrane protein</topology>
    </subcellularLocation>
</comment>
<comment type="similarity">
    <text evidence="1">Belongs to the ATPase epsilon chain family.</text>
</comment>
<gene>
    <name evidence="1" type="primary">atpE</name>
    <name type="ordered locus">Grc000129</name>
</gene>
<geneLocation type="chloroplast"/>
<keyword id="KW-0066">ATP synthesis</keyword>
<keyword id="KW-0139">CF(1)</keyword>
<keyword id="KW-0150">Chloroplast</keyword>
<keyword id="KW-0375">Hydrogen ion transport</keyword>
<keyword id="KW-0406">Ion transport</keyword>
<keyword id="KW-0472">Membrane</keyword>
<keyword id="KW-0934">Plastid</keyword>
<keyword id="KW-0793">Thylakoid</keyword>
<keyword id="KW-0813">Transport</keyword>